<sequence length="310" mass="33887">MPKFRVSLFSLALMLAVPFAPQAVAKTAAATTASQPEIASGSAMIVDLNTNKVIYSNHPDLVRPIASISKLMTAMVVLDARLPLDEKLKVDISQTPEMKGVYSRVRLNSEISRKDMLLLALMSSENRAAASLAHHYPGGYKAFIKAMNAKAKSLGMNNTRFVEPTGLSVHNVSTARDLTKLLIASKQYPLIGQLSTTREDMATFSNPTYTLPFRNTNHLVYRDNWNIQLTKTGFTNAAGHCLVMRTVINNKPVALVVMDAFGKYTHFADASRLRTWIETGKVMPVPAAALSYKKQKAAQMAAAGQTAQND</sequence>
<feature type="signal peptide" evidence="2">
    <location>
        <begin position="1"/>
        <end position="25"/>
    </location>
</feature>
<feature type="chain" id="PRO_0000027237" description="D-alanyl-D-alanine endopeptidase">
    <location>
        <begin position="26"/>
        <end position="310"/>
    </location>
</feature>
<feature type="active site" description="Acyl-ester intermediate" evidence="1">
    <location>
        <position position="67"/>
    </location>
</feature>
<feature type="active site" description="Proton acceptor" evidence="1">
    <location>
        <position position="70"/>
    </location>
</feature>
<feature type="active site" evidence="1">
    <location>
        <position position="124"/>
    </location>
</feature>
<feature type="binding site" evidence="1">
    <location>
        <position position="231"/>
    </location>
    <ligand>
        <name>substrate</name>
    </ligand>
</feature>
<reference key="1">
    <citation type="submission" date="1993-10" db="EMBL/GenBank/DDBJ databases">
        <title>Automated multiplex sequencing of the E.coli genome.</title>
        <authorList>
            <person name="Richterich P."/>
            <person name="Lakey N."/>
            <person name="Gryan G."/>
            <person name="Jaehn L."/>
            <person name="Mintz L."/>
            <person name="Robison K."/>
            <person name="Church G.M."/>
        </authorList>
    </citation>
    <scope>NUCLEOTIDE SEQUENCE [GENOMIC DNA]</scope>
    <source>
        <strain>K12 / BHB2600</strain>
    </source>
</reference>
<reference key="2">
    <citation type="journal article" date="1997" name="Science">
        <title>The complete genome sequence of Escherichia coli K-12.</title>
        <authorList>
            <person name="Blattner F.R."/>
            <person name="Plunkett G. III"/>
            <person name="Bloch C.A."/>
            <person name="Perna N.T."/>
            <person name="Burland V."/>
            <person name="Riley M."/>
            <person name="Collado-Vides J."/>
            <person name="Glasner J.D."/>
            <person name="Rode C.K."/>
            <person name="Mayhew G.F."/>
            <person name="Gregor J."/>
            <person name="Davis N.W."/>
            <person name="Kirkpatrick H.A."/>
            <person name="Goeden M.A."/>
            <person name="Rose D.J."/>
            <person name="Mau B."/>
            <person name="Shao Y."/>
        </authorList>
    </citation>
    <scope>NUCLEOTIDE SEQUENCE [LARGE SCALE GENOMIC DNA]</scope>
    <source>
        <strain>K12 / MG1655 / ATCC 47076</strain>
    </source>
</reference>
<reference key="3">
    <citation type="journal article" date="2006" name="Mol. Syst. Biol.">
        <title>Highly accurate genome sequences of Escherichia coli K-12 strains MG1655 and W3110.</title>
        <authorList>
            <person name="Hayashi K."/>
            <person name="Morooka N."/>
            <person name="Yamamoto Y."/>
            <person name="Fujita K."/>
            <person name="Isono K."/>
            <person name="Choi S."/>
            <person name="Ohtsubo E."/>
            <person name="Baba T."/>
            <person name="Wanner B.L."/>
            <person name="Mori H."/>
            <person name="Horiuchi T."/>
        </authorList>
    </citation>
    <scope>NUCLEOTIDE SEQUENCE [LARGE SCALE GENOMIC DNA]</scope>
    <source>
        <strain>K12 / W3110 / ATCC 27325 / DSM 5911</strain>
    </source>
</reference>
<reference key="4">
    <citation type="journal article" date="1984" name="Eur. J. Biochem.">
        <title>Nucleotide sequence of the respiratory D-lactate dehydrogenase gene of Escherichia coli.</title>
        <authorList>
            <person name="Campbell H.D."/>
            <person name="Rogers B.L."/>
            <person name="Young I.G."/>
        </authorList>
    </citation>
    <scope>NUCLEOTIDE SEQUENCE [GENOMIC DNA] OF 198-310</scope>
</reference>
<reference key="5">
    <citation type="journal article" date="1995" name="J. Bacteriol.">
        <title>Identification and cloning of the gene encoding penicillin-binding protein 7 of Escherichia coli.</title>
        <authorList>
            <person name="Henderson T.A."/>
            <person name="Templin M."/>
            <person name="Young K.D."/>
        </authorList>
    </citation>
    <scope>PROTEIN SEQUENCE OF 26-33</scope>
    <scope>CHARACTERIZATION</scope>
</reference>
<reference key="6">
    <citation type="journal article" date="1994" name="Eur. J. Biochem.">
        <title>Penicillin-binding protein 7/8 of Escherichia coli is a DD-endopeptidase.</title>
        <authorList>
            <person name="Romeis T."/>
            <person name="Holtje J.V."/>
        </authorList>
    </citation>
    <scope>CHARACTERIZATION</scope>
</reference>
<dbReference type="EC" id="3.4.21.-"/>
<dbReference type="EMBL" id="U00007">
    <property type="protein sequence ID" value="AAA60496.1"/>
    <property type="status" value="ALT_INIT"/>
    <property type="molecule type" value="Genomic_DNA"/>
</dbReference>
<dbReference type="EMBL" id="U00096">
    <property type="protein sequence ID" value="AAC75195.2"/>
    <property type="molecule type" value="Genomic_DNA"/>
</dbReference>
<dbReference type="EMBL" id="AP009048">
    <property type="protein sequence ID" value="BAE76611.1"/>
    <property type="molecule type" value="Genomic_DNA"/>
</dbReference>
<dbReference type="EMBL" id="X01067">
    <property type="protein sequence ID" value="CAA25532.1"/>
    <property type="molecule type" value="Genomic_DNA"/>
</dbReference>
<dbReference type="PIR" id="E64981">
    <property type="entry name" value="E64981"/>
</dbReference>
<dbReference type="RefSeq" id="NP_416638.4">
    <property type="nucleotide sequence ID" value="NC_000913.3"/>
</dbReference>
<dbReference type="RefSeq" id="WP_001319943.1">
    <property type="nucleotide sequence ID" value="NZ_STEB01000002.1"/>
</dbReference>
<dbReference type="SMR" id="P0AFI5"/>
<dbReference type="BioGRID" id="4260453">
    <property type="interactions" value="256"/>
</dbReference>
<dbReference type="BioGRID" id="851004">
    <property type="interactions" value="8"/>
</dbReference>
<dbReference type="DIP" id="DIP-48108N"/>
<dbReference type="FunCoup" id="P0AFI5">
    <property type="interactions" value="16"/>
</dbReference>
<dbReference type="IntAct" id="P0AFI5">
    <property type="interactions" value="9"/>
</dbReference>
<dbReference type="STRING" id="511145.b2134"/>
<dbReference type="DrugBank" id="DB01331">
    <property type="generic name" value="Cefoxitin"/>
</dbReference>
<dbReference type="MEROPS" id="S11.002"/>
<dbReference type="jPOST" id="P0AFI5"/>
<dbReference type="PaxDb" id="511145-b2134"/>
<dbReference type="EnsemblBacteria" id="AAC75195">
    <property type="protein sequence ID" value="AAC75195"/>
    <property type="gene ID" value="b2134"/>
</dbReference>
<dbReference type="GeneID" id="75206381"/>
<dbReference type="GeneID" id="946662"/>
<dbReference type="KEGG" id="ecj:JW5355"/>
<dbReference type="KEGG" id="eco:b2134"/>
<dbReference type="KEGG" id="ecoc:C3026_11965"/>
<dbReference type="PATRIC" id="fig|1411691.4.peg.109"/>
<dbReference type="EchoBASE" id="EB1952"/>
<dbReference type="eggNOG" id="COG1686">
    <property type="taxonomic scope" value="Bacteria"/>
</dbReference>
<dbReference type="HOGENOM" id="CLU_027070_0_3_6"/>
<dbReference type="InParanoid" id="P0AFI5"/>
<dbReference type="OMA" id="RKYPMLS"/>
<dbReference type="OrthoDB" id="5688590at2"/>
<dbReference type="PhylomeDB" id="P0AFI5"/>
<dbReference type="BioCyc" id="EcoCyc:EG12015-MONOMER"/>
<dbReference type="BioCyc" id="MetaCyc:EG12015-MONOMER"/>
<dbReference type="PRO" id="PR:P0AFI5"/>
<dbReference type="Proteomes" id="UP000000625">
    <property type="component" value="Chromosome"/>
</dbReference>
<dbReference type="GO" id="GO:0042597">
    <property type="term" value="C:periplasmic space"/>
    <property type="evidence" value="ECO:0007669"/>
    <property type="project" value="UniProtKB-SubCell"/>
</dbReference>
<dbReference type="GO" id="GO:0004175">
    <property type="term" value="F:endopeptidase activity"/>
    <property type="evidence" value="ECO:0000314"/>
    <property type="project" value="EcoCyc"/>
</dbReference>
<dbReference type="GO" id="GO:0009002">
    <property type="term" value="F:serine-type D-Ala-D-Ala carboxypeptidase activity"/>
    <property type="evidence" value="ECO:0007669"/>
    <property type="project" value="InterPro"/>
</dbReference>
<dbReference type="GO" id="GO:0071555">
    <property type="term" value="P:cell wall organization"/>
    <property type="evidence" value="ECO:0000314"/>
    <property type="project" value="EcoCyc"/>
</dbReference>
<dbReference type="GO" id="GO:0043093">
    <property type="term" value="P:FtsZ-dependent cytokinesis"/>
    <property type="evidence" value="ECO:0000315"/>
    <property type="project" value="EcoCyc"/>
</dbReference>
<dbReference type="GO" id="GO:0009252">
    <property type="term" value="P:peptidoglycan biosynthetic process"/>
    <property type="evidence" value="ECO:0007669"/>
    <property type="project" value="UniProtKB-KW"/>
</dbReference>
<dbReference type="GO" id="GO:0000270">
    <property type="term" value="P:peptidoglycan metabolic process"/>
    <property type="evidence" value="ECO:0000314"/>
    <property type="project" value="EcoCyc"/>
</dbReference>
<dbReference type="GO" id="GO:0006508">
    <property type="term" value="P:proteolysis"/>
    <property type="evidence" value="ECO:0007669"/>
    <property type="project" value="InterPro"/>
</dbReference>
<dbReference type="GO" id="GO:0008360">
    <property type="term" value="P:regulation of cell shape"/>
    <property type="evidence" value="ECO:0007669"/>
    <property type="project" value="UniProtKB-KW"/>
</dbReference>
<dbReference type="GO" id="GO:0009410">
    <property type="term" value="P:response to xenobiotic stimulus"/>
    <property type="evidence" value="ECO:0000314"/>
    <property type="project" value="EcoCyc"/>
</dbReference>
<dbReference type="FunFam" id="3.40.710.10:FF:000007">
    <property type="entry name" value="D-alanyl-D-alanine endopeptidase"/>
    <property type="match status" value="1"/>
</dbReference>
<dbReference type="Gene3D" id="3.40.710.10">
    <property type="entry name" value="DD-peptidase/beta-lactamase superfamily"/>
    <property type="match status" value="1"/>
</dbReference>
<dbReference type="InterPro" id="IPR012338">
    <property type="entry name" value="Beta-lactam/transpept-like"/>
</dbReference>
<dbReference type="InterPro" id="IPR018044">
    <property type="entry name" value="Peptidase_S11"/>
</dbReference>
<dbReference type="InterPro" id="IPR001967">
    <property type="entry name" value="Peptidase_S11_N"/>
</dbReference>
<dbReference type="NCBIfam" id="NF008668">
    <property type="entry name" value="PRK11669.1"/>
    <property type="match status" value="1"/>
</dbReference>
<dbReference type="PANTHER" id="PTHR21581">
    <property type="entry name" value="D-ALANYL-D-ALANINE CARBOXYPEPTIDASE"/>
    <property type="match status" value="1"/>
</dbReference>
<dbReference type="PANTHER" id="PTHR21581:SF26">
    <property type="entry name" value="D-ALANYL-D-ALANINE ENDOPEPTIDASE"/>
    <property type="match status" value="1"/>
</dbReference>
<dbReference type="Pfam" id="PF00768">
    <property type="entry name" value="Peptidase_S11"/>
    <property type="match status" value="1"/>
</dbReference>
<dbReference type="PRINTS" id="PR00725">
    <property type="entry name" value="DADACBPTASE1"/>
</dbReference>
<dbReference type="SUPFAM" id="SSF56601">
    <property type="entry name" value="beta-lactamase/transpeptidase-like"/>
    <property type="match status" value="1"/>
</dbReference>
<name>PBP7_ECOLI</name>
<proteinExistence type="evidence at protein level"/>
<protein>
    <recommendedName>
        <fullName>D-alanyl-D-alanine endopeptidase</fullName>
        <shortName>DD-endopeptidase</shortName>
        <ecNumber>3.4.21.-</ecNumber>
    </recommendedName>
    <alternativeName>
        <fullName>Penicillin-binding protein 7</fullName>
        <shortName>PBP-7</shortName>
    </alternativeName>
</protein>
<keyword id="KW-0133">Cell shape</keyword>
<keyword id="KW-0961">Cell wall biogenesis/degradation</keyword>
<keyword id="KW-0903">Direct protein sequencing</keyword>
<keyword id="KW-0378">Hydrolase</keyword>
<keyword id="KW-0573">Peptidoglycan synthesis</keyword>
<keyword id="KW-0574">Periplasm</keyword>
<keyword id="KW-1185">Reference proteome</keyword>
<keyword id="KW-0732">Signal</keyword>
<organism>
    <name type="scientific">Escherichia coli (strain K12)</name>
    <dbReference type="NCBI Taxonomy" id="83333"/>
    <lineage>
        <taxon>Bacteria</taxon>
        <taxon>Pseudomonadati</taxon>
        <taxon>Pseudomonadota</taxon>
        <taxon>Gammaproteobacteria</taxon>
        <taxon>Enterobacterales</taxon>
        <taxon>Enterobacteriaceae</taxon>
        <taxon>Escherichia</taxon>
    </lineage>
</organism>
<gene>
    <name type="primary">pbpG</name>
    <name type="synonym">yohB</name>
    <name type="ordered locus">b2134</name>
    <name type="ordered locus">JW5355</name>
</gene>
<comment type="function">
    <text>Cell wall formation. May play a specialized role in remodeling the cell wall. Specifically hydrolyzes the DD-diaminopimelate-alanine bonds in high-molecular-mass murein sacculi.</text>
</comment>
<comment type="subcellular location">
    <subcellularLocation>
        <location>Periplasm</location>
    </subcellularLocation>
</comment>
<comment type="PTM">
    <text>Pbp8 is a proteolytic product of Pbp7.</text>
</comment>
<comment type="miscellaneous">
    <text>In E.coli there are three murein endopeptidases: two are penicillin sensitive (DacB and PbpG), the other (MepA) not.</text>
</comment>
<comment type="similarity">
    <text evidence="3">Belongs to the peptidase S11 family.</text>
</comment>
<comment type="sequence caution" evidence="3">
    <conflict type="erroneous initiation">
        <sequence resource="EMBL-CDS" id="AAA60496"/>
    </conflict>
</comment>
<evidence type="ECO:0000250" key="1"/>
<evidence type="ECO:0000269" key="2">
    <source>
    </source>
</evidence>
<evidence type="ECO:0000305" key="3"/>
<accession>P0AFI5</accession>
<accession>P33364</accession>
<accession>Q2MAU5</accession>